<protein>
    <recommendedName>
        <fullName evidence="1">Protoheme IX farnesyltransferase</fullName>
        <ecNumber evidence="1">2.5.1.141</ecNumber>
    </recommendedName>
    <alternativeName>
        <fullName evidence="1">Heme B farnesyltransferase</fullName>
    </alternativeName>
    <alternativeName>
        <fullName evidence="1">Heme O synthase</fullName>
    </alternativeName>
</protein>
<organism>
    <name type="scientific">Paenarthrobacter aurescens (strain TC1)</name>
    <dbReference type="NCBI Taxonomy" id="290340"/>
    <lineage>
        <taxon>Bacteria</taxon>
        <taxon>Bacillati</taxon>
        <taxon>Actinomycetota</taxon>
        <taxon>Actinomycetes</taxon>
        <taxon>Micrococcales</taxon>
        <taxon>Micrococcaceae</taxon>
        <taxon>Paenarthrobacter</taxon>
    </lineage>
</organism>
<gene>
    <name evidence="1" type="primary">ctaB</name>
    <name type="ordered locus">AAur_2098</name>
</gene>
<keyword id="KW-1003">Cell membrane</keyword>
<keyword id="KW-0350">Heme biosynthesis</keyword>
<keyword id="KW-0472">Membrane</keyword>
<keyword id="KW-0808">Transferase</keyword>
<keyword id="KW-0812">Transmembrane</keyword>
<keyword id="KW-1133">Transmembrane helix</keyword>
<comment type="function">
    <text evidence="1">Converts heme B (protoheme IX) to heme O by substitution of the vinyl group on carbon 2 of heme B porphyrin ring with a hydroxyethyl farnesyl side group.</text>
</comment>
<comment type="catalytic activity">
    <reaction evidence="1">
        <text>heme b + (2E,6E)-farnesyl diphosphate + H2O = Fe(II)-heme o + diphosphate</text>
        <dbReference type="Rhea" id="RHEA:28070"/>
        <dbReference type="ChEBI" id="CHEBI:15377"/>
        <dbReference type="ChEBI" id="CHEBI:33019"/>
        <dbReference type="ChEBI" id="CHEBI:60344"/>
        <dbReference type="ChEBI" id="CHEBI:60530"/>
        <dbReference type="ChEBI" id="CHEBI:175763"/>
        <dbReference type="EC" id="2.5.1.141"/>
    </reaction>
</comment>
<comment type="pathway">
    <text evidence="1">Porphyrin-containing compound metabolism; heme O biosynthesis; heme O from protoheme: step 1/1.</text>
</comment>
<comment type="subcellular location">
    <subcellularLocation>
        <location evidence="1">Cell membrane</location>
        <topology evidence="1">Multi-pass membrane protein</topology>
    </subcellularLocation>
</comment>
<comment type="miscellaneous">
    <text evidence="1">Carbon 2 of the heme B porphyrin ring is defined according to the Fischer nomenclature.</text>
</comment>
<comment type="similarity">
    <text evidence="1">Belongs to the UbiA prenyltransferase family. Protoheme IX farnesyltransferase subfamily.</text>
</comment>
<dbReference type="EC" id="2.5.1.141" evidence="1"/>
<dbReference type="EMBL" id="CP000474">
    <property type="protein sequence ID" value="ABM08239.1"/>
    <property type="molecule type" value="Genomic_DNA"/>
</dbReference>
<dbReference type="RefSeq" id="WP_011774786.1">
    <property type="nucleotide sequence ID" value="NC_008711.1"/>
</dbReference>
<dbReference type="SMR" id="A1R6I0"/>
<dbReference type="STRING" id="290340.AAur_2098"/>
<dbReference type="KEGG" id="aau:AAur_2098"/>
<dbReference type="eggNOG" id="COG0109">
    <property type="taxonomic scope" value="Bacteria"/>
</dbReference>
<dbReference type="HOGENOM" id="CLU_029631_0_1_11"/>
<dbReference type="OrthoDB" id="9814417at2"/>
<dbReference type="UniPathway" id="UPA00834">
    <property type="reaction ID" value="UER00712"/>
</dbReference>
<dbReference type="Proteomes" id="UP000000637">
    <property type="component" value="Chromosome"/>
</dbReference>
<dbReference type="GO" id="GO:0005886">
    <property type="term" value="C:plasma membrane"/>
    <property type="evidence" value="ECO:0007669"/>
    <property type="project" value="UniProtKB-SubCell"/>
</dbReference>
<dbReference type="GO" id="GO:0008495">
    <property type="term" value="F:protoheme IX farnesyltransferase activity"/>
    <property type="evidence" value="ECO:0007669"/>
    <property type="project" value="UniProtKB-UniRule"/>
</dbReference>
<dbReference type="GO" id="GO:0048034">
    <property type="term" value="P:heme O biosynthetic process"/>
    <property type="evidence" value="ECO:0007669"/>
    <property type="project" value="UniProtKB-UniRule"/>
</dbReference>
<dbReference type="CDD" id="cd13957">
    <property type="entry name" value="PT_UbiA_Cox10"/>
    <property type="match status" value="1"/>
</dbReference>
<dbReference type="FunFam" id="1.10.357.140:FF:000001">
    <property type="entry name" value="Protoheme IX farnesyltransferase"/>
    <property type="match status" value="1"/>
</dbReference>
<dbReference type="Gene3D" id="1.10.357.140">
    <property type="entry name" value="UbiA prenyltransferase"/>
    <property type="match status" value="1"/>
</dbReference>
<dbReference type="HAMAP" id="MF_00154">
    <property type="entry name" value="CyoE_CtaB"/>
    <property type="match status" value="1"/>
</dbReference>
<dbReference type="InterPro" id="IPR006369">
    <property type="entry name" value="Protohaem_IX_farnesylTrfase"/>
</dbReference>
<dbReference type="InterPro" id="IPR000537">
    <property type="entry name" value="UbiA_prenyltransferase"/>
</dbReference>
<dbReference type="InterPro" id="IPR030470">
    <property type="entry name" value="UbiA_prenylTrfase_CS"/>
</dbReference>
<dbReference type="InterPro" id="IPR044878">
    <property type="entry name" value="UbiA_sf"/>
</dbReference>
<dbReference type="NCBIfam" id="TIGR01473">
    <property type="entry name" value="cyoE_ctaB"/>
    <property type="match status" value="1"/>
</dbReference>
<dbReference type="NCBIfam" id="NF003349">
    <property type="entry name" value="PRK04375.1-2"/>
    <property type="match status" value="1"/>
</dbReference>
<dbReference type="PANTHER" id="PTHR43448:SF7">
    <property type="entry name" value="4-HYDROXYBENZOATE SOLANESYLTRANSFERASE"/>
    <property type="match status" value="1"/>
</dbReference>
<dbReference type="PANTHER" id="PTHR43448">
    <property type="entry name" value="PROTOHEME IX FARNESYLTRANSFERASE, MITOCHONDRIAL"/>
    <property type="match status" value="1"/>
</dbReference>
<dbReference type="Pfam" id="PF01040">
    <property type="entry name" value="UbiA"/>
    <property type="match status" value="1"/>
</dbReference>
<dbReference type="PROSITE" id="PS00943">
    <property type="entry name" value="UBIA"/>
    <property type="match status" value="1"/>
</dbReference>
<name>COXX_PAEAT</name>
<reference key="1">
    <citation type="journal article" date="2006" name="PLoS Genet.">
        <title>Secrets of soil survival revealed by the genome sequence of Arthrobacter aurescens TC1.</title>
        <authorList>
            <person name="Mongodin E.F."/>
            <person name="Shapir N."/>
            <person name="Daugherty S.C."/>
            <person name="DeBoy R.T."/>
            <person name="Emerson J.B."/>
            <person name="Shvartzbeyn A."/>
            <person name="Radune D."/>
            <person name="Vamathevan J."/>
            <person name="Riggs F."/>
            <person name="Grinberg V."/>
            <person name="Khouri H.M."/>
            <person name="Wackett L.P."/>
            <person name="Nelson K.E."/>
            <person name="Sadowsky M.J."/>
        </authorList>
    </citation>
    <scope>NUCLEOTIDE SEQUENCE [LARGE SCALE GENOMIC DNA]</scope>
    <source>
        <strain>TC1</strain>
    </source>
</reference>
<sequence length="320" mass="34337">MTAAVSTTDTPLNASPARGSIGISRKFKAYLALTKPRVIELLLVSTLPTMIFAQRGFPSIGLILATLVGGAFAAGSAGVFNCYIDRDIDKLMHRTEKRPLVTGEVTPREALVFAWILGAASIAILWFGANPLSAWLGLGAIVFYVVIYTMILKRRTAQNIVWGGAAGCFPVLIAWAAVTNTVEWPAIVLFMVIFLWTPPHYWPLSMRYGEDYRNAKVPMLGAIAGAKVVSVQVVLYAWAMVACSLLMVPVGGAGWVYTIAAVAAGAWFLYESHALYKRAQGGDVSNKGAMKVFHGSISYLTLLFIALAVDPFVGSAIVGS</sequence>
<evidence type="ECO:0000255" key="1">
    <source>
        <dbReference type="HAMAP-Rule" id="MF_00154"/>
    </source>
</evidence>
<proteinExistence type="inferred from homology"/>
<feature type="chain" id="PRO_0000326995" description="Protoheme IX farnesyltransferase">
    <location>
        <begin position="1"/>
        <end position="320"/>
    </location>
</feature>
<feature type="transmembrane region" description="Helical" evidence="1">
    <location>
        <begin position="38"/>
        <end position="58"/>
    </location>
</feature>
<feature type="transmembrane region" description="Helical" evidence="1">
    <location>
        <begin position="60"/>
        <end position="80"/>
    </location>
</feature>
<feature type="transmembrane region" description="Helical" evidence="1">
    <location>
        <begin position="109"/>
        <end position="129"/>
    </location>
</feature>
<feature type="transmembrane region" description="Helical" evidence="1">
    <location>
        <begin position="132"/>
        <end position="152"/>
    </location>
</feature>
<feature type="transmembrane region" description="Helical" evidence="1">
    <location>
        <begin position="159"/>
        <end position="179"/>
    </location>
</feature>
<feature type="transmembrane region" description="Helical" evidence="1">
    <location>
        <begin position="184"/>
        <end position="204"/>
    </location>
</feature>
<feature type="transmembrane region" description="Helical" evidence="1">
    <location>
        <begin position="222"/>
        <end position="242"/>
    </location>
</feature>
<feature type="transmembrane region" description="Helical" evidence="1">
    <location>
        <begin position="254"/>
        <end position="276"/>
    </location>
</feature>
<feature type="transmembrane region" description="Helical" evidence="1">
    <location>
        <begin position="299"/>
        <end position="319"/>
    </location>
</feature>
<accession>A1R6I0</accession>